<keyword id="KW-0963">Cytoplasm</keyword>
<keyword id="KW-0342">GTP-binding</keyword>
<keyword id="KW-0436">Ligase</keyword>
<keyword id="KW-0460">Magnesium</keyword>
<keyword id="KW-0479">Metal-binding</keyword>
<keyword id="KW-0547">Nucleotide-binding</keyword>
<keyword id="KW-0658">Purine biosynthesis</keyword>
<comment type="function">
    <text evidence="1">Plays an important role in the de novo pathway of purine nucleotide biosynthesis. Catalyzes the first committed step in the biosynthesis of AMP from IMP.</text>
</comment>
<comment type="catalytic activity">
    <reaction evidence="1">
        <text>IMP + L-aspartate + GTP = N(6)-(1,2-dicarboxyethyl)-AMP + GDP + phosphate + 2 H(+)</text>
        <dbReference type="Rhea" id="RHEA:15753"/>
        <dbReference type="ChEBI" id="CHEBI:15378"/>
        <dbReference type="ChEBI" id="CHEBI:29991"/>
        <dbReference type="ChEBI" id="CHEBI:37565"/>
        <dbReference type="ChEBI" id="CHEBI:43474"/>
        <dbReference type="ChEBI" id="CHEBI:57567"/>
        <dbReference type="ChEBI" id="CHEBI:58053"/>
        <dbReference type="ChEBI" id="CHEBI:58189"/>
        <dbReference type="EC" id="6.3.4.4"/>
    </reaction>
</comment>
<comment type="cofactor">
    <cofactor evidence="1">
        <name>Mg(2+)</name>
        <dbReference type="ChEBI" id="CHEBI:18420"/>
    </cofactor>
    <text evidence="1">Binds 1 Mg(2+) ion per subunit.</text>
</comment>
<comment type="pathway">
    <text evidence="1">Purine metabolism; AMP biosynthesis via de novo pathway; AMP from IMP: step 1/2.</text>
</comment>
<comment type="subunit">
    <text evidence="1">Homodimer.</text>
</comment>
<comment type="subcellular location">
    <subcellularLocation>
        <location evidence="1">Cytoplasm</location>
    </subcellularLocation>
</comment>
<comment type="similarity">
    <text evidence="1">Belongs to the adenylosuccinate synthetase family.</text>
</comment>
<proteinExistence type="inferred from homology"/>
<sequence length="448" mass="48331">MSASAVNVTPGRNVVVVGTQWGDEGKGKIVDWLTDHAQGVVRFQGGHNAGHTLIIGGKKTILRLIPSGIMREGVACYIGNGVVLSPEALFKEIGELEEAGLSVRERLFISEATTLILPYHVAIDQAREARRGAGKIGTTGRGIGPAYEDKVGRRALRVQDLFDARTFADRLRENLDFHNFVLTQYLGGAAVDFQATLDTMLGYADRLKPMVTDVSRRLYEENHAGRNLLFEGAQGTLLDIDHGTYPFVTSSNCVAGAAAAGAGVGPQKLDYILGITKAYCTRVGSGPFPSELYDADNPSRQDQIGITLANVGKEFGSVTGRPRRTGWLDAAALRRSIQINGVSGLCMTKLDVLDGLDEVKLCVGYKIDGEDVDLLPRGAAEVARCEPVYETFGGWKESTVGIDSWDALPANARAYLTRVQEVAGVPIDMVSTGPDRDETILLRHPFKV</sequence>
<organism>
    <name type="scientific">Burkholderia pseudomallei (strain 1106a)</name>
    <dbReference type="NCBI Taxonomy" id="357348"/>
    <lineage>
        <taxon>Bacteria</taxon>
        <taxon>Pseudomonadati</taxon>
        <taxon>Pseudomonadota</taxon>
        <taxon>Betaproteobacteria</taxon>
        <taxon>Burkholderiales</taxon>
        <taxon>Burkholderiaceae</taxon>
        <taxon>Burkholderia</taxon>
        <taxon>pseudomallei group</taxon>
    </lineage>
</organism>
<reference key="1">
    <citation type="journal article" date="2010" name="Genome Biol. Evol.">
        <title>Continuing evolution of Burkholderia mallei through genome reduction and large-scale rearrangements.</title>
        <authorList>
            <person name="Losada L."/>
            <person name="Ronning C.M."/>
            <person name="DeShazer D."/>
            <person name="Woods D."/>
            <person name="Fedorova N."/>
            <person name="Kim H.S."/>
            <person name="Shabalina S.A."/>
            <person name="Pearson T.R."/>
            <person name="Brinkac L."/>
            <person name="Tan P."/>
            <person name="Nandi T."/>
            <person name="Crabtree J."/>
            <person name="Badger J."/>
            <person name="Beckstrom-Sternberg S."/>
            <person name="Saqib M."/>
            <person name="Schutzer S.E."/>
            <person name="Keim P."/>
            <person name="Nierman W.C."/>
        </authorList>
    </citation>
    <scope>NUCLEOTIDE SEQUENCE [LARGE SCALE GENOMIC DNA]</scope>
    <source>
        <strain>1106a</strain>
    </source>
</reference>
<dbReference type="EC" id="6.3.4.4" evidence="1"/>
<dbReference type="EMBL" id="CP000572">
    <property type="protein sequence ID" value="ABN89922.1"/>
    <property type="molecule type" value="Genomic_DNA"/>
</dbReference>
<dbReference type="RefSeq" id="WP_004534924.1">
    <property type="nucleotide sequence ID" value="NC_009076.1"/>
</dbReference>
<dbReference type="SMR" id="A3NVV9"/>
<dbReference type="KEGG" id="bpl:BURPS1106A_2216"/>
<dbReference type="HOGENOM" id="CLU_029848_0_0_4"/>
<dbReference type="UniPathway" id="UPA00075">
    <property type="reaction ID" value="UER00335"/>
</dbReference>
<dbReference type="Proteomes" id="UP000006738">
    <property type="component" value="Chromosome I"/>
</dbReference>
<dbReference type="GO" id="GO:0005737">
    <property type="term" value="C:cytoplasm"/>
    <property type="evidence" value="ECO:0007669"/>
    <property type="project" value="UniProtKB-SubCell"/>
</dbReference>
<dbReference type="GO" id="GO:0004019">
    <property type="term" value="F:adenylosuccinate synthase activity"/>
    <property type="evidence" value="ECO:0007669"/>
    <property type="project" value="UniProtKB-UniRule"/>
</dbReference>
<dbReference type="GO" id="GO:0005525">
    <property type="term" value="F:GTP binding"/>
    <property type="evidence" value="ECO:0007669"/>
    <property type="project" value="UniProtKB-UniRule"/>
</dbReference>
<dbReference type="GO" id="GO:0000287">
    <property type="term" value="F:magnesium ion binding"/>
    <property type="evidence" value="ECO:0007669"/>
    <property type="project" value="UniProtKB-UniRule"/>
</dbReference>
<dbReference type="GO" id="GO:0044208">
    <property type="term" value="P:'de novo' AMP biosynthetic process"/>
    <property type="evidence" value="ECO:0007669"/>
    <property type="project" value="UniProtKB-UniRule"/>
</dbReference>
<dbReference type="GO" id="GO:0046040">
    <property type="term" value="P:IMP metabolic process"/>
    <property type="evidence" value="ECO:0007669"/>
    <property type="project" value="TreeGrafter"/>
</dbReference>
<dbReference type="CDD" id="cd03108">
    <property type="entry name" value="AdSS"/>
    <property type="match status" value="1"/>
</dbReference>
<dbReference type="FunFam" id="1.10.300.10:FF:000001">
    <property type="entry name" value="Adenylosuccinate synthetase"/>
    <property type="match status" value="1"/>
</dbReference>
<dbReference type="FunFam" id="3.90.170.10:FF:000001">
    <property type="entry name" value="Adenylosuccinate synthetase"/>
    <property type="match status" value="1"/>
</dbReference>
<dbReference type="Gene3D" id="3.40.440.10">
    <property type="entry name" value="Adenylosuccinate Synthetase, subunit A, domain 1"/>
    <property type="match status" value="1"/>
</dbReference>
<dbReference type="Gene3D" id="1.10.300.10">
    <property type="entry name" value="Adenylosuccinate Synthetase, subunit A, domain 2"/>
    <property type="match status" value="1"/>
</dbReference>
<dbReference type="Gene3D" id="3.90.170.10">
    <property type="entry name" value="Adenylosuccinate Synthetase, subunit A, domain 3"/>
    <property type="match status" value="1"/>
</dbReference>
<dbReference type="HAMAP" id="MF_00011">
    <property type="entry name" value="Adenylosucc_synth"/>
    <property type="match status" value="1"/>
</dbReference>
<dbReference type="InterPro" id="IPR018220">
    <property type="entry name" value="Adenylosuccin_syn_GTP-bd"/>
</dbReference>
<dbReference type="InterPro" id="IPR033128">
    <property type="entry name" value="Adenylosuccin_syn_Lys_AS"/>
</dbReference>
<dbReference type="InterPro" id="IPR042109">
    <property type="entry name" value="Adenylosuccinate_synth_dom1"/>
</dbReference>
<dbReference type="InterPro" id="IPR042110">
    <property type="entry name" value="Adenylosuccinate_synth_dom2"/>
</dbReference>
<dbReference type="InterPro" id="IPR042111">
    <property type="entry name" value="Adenylosuccinate_synth_dom3"/>
</dbReference>
<dbReference type="InterPro" id="IPR001114">
    <property type="entry name" value="Adenylosuccinate_synthetase"/>
</dbReference>
<dbReference type="InterPro" id="IPR027417">
    <property type="entry name" value="P-loop_NTPase"/>
</dbReference>
<dbReference type="NCBIfam" id="NF002223">
    <property type="entry name" value="PRK01117.1"/>
    <property type="match status" value="1"/>
</dbReference>
<dbReference type="NCBIfam" id="TIGR00184">
    <property type="entry name" value="purA"/>
    <property type="match status" value="1"/>
</dbReference>
<dbReference type="PANTHER" id="PTHR11846">
    <property type="entry name" value="ADENYLOSUCCINATE SYNTHETASE"/>
    <property type="match status" value="1"/>
</dbReference>
<dbReference type="PANTHER" id="PTHR11846:SF0">
    <property type="entry name" value="ADENYLOSUCCINATE SYNTHETASE"/>
    <property type="match status" value="1"/>
</dbReference>
<dbReference type="Pfam" id="PF00709">
    <property type="entry name" value="Adenylsucc_synt"/>
    <property type="match status" value="1"/>
</dbReference>
<dbReference type="SMART" id="SM00788">
    <property type="entry name" value="Adenylsucc_synt"/>
    <property type="match status" value="1"/>
</dbReference>
<dbReference type="SUPFAM" id="SSF52540">
    <property type="entry name" value="P-loop containing nucleoside triphosphate hydrolases"/>
    <property type="match status" value="1"/>
</dbReference>
<dbReference type="PROSITE" id="PS01266">
    <property type="entry name" value="ADENYLOSUCCIN_SYN_1"/>
    <property type="match status" value="1"/>
</dbReference>
<dbReference type="PROSITE" id="PS00513">
    <property type="entry name" value="ADENYLOSUCCIN_SYN_2"/>
    <property type="match status" value="1"/>
</dbReference>
<protein>
    <recommendedName>
        <fullName evidence="1">Adenylosuccinate synthetase</fullName>
        <shortName evidence="1">AMPSase</shortName>
        <shortName evidence="1">AdSS</shortName>
        <ecNumber evidence="1">6.3.4.4</ecNumber>
    </recommendedName>
    <alternativeName>
        <fullName evidence="1">IMP--aspartate ligase</fullName>
    </alternativeName>
</protein>
<feature type="chain" id="PRO_1000000789" description="Adenylosuccinate synthetase">
    <location>
        <begin position="1"/>
        <end position="448"/>
    </location>
</feature>
<feature type="active site" description="Proton acceptor" evidence="1">
    <location>
        <position position="23"/>
    </location>
</feature>
<feature type="active site" description="Proton donor" evidence="1">
    <location>
        <position position="51"/>
    </location>
</feature>
<feature type="binding site" evidence="1">
    <location>
        <begin position="22"/>
        <end position="28"/>
    </location>
    <ligand>
        <name>GTP</name>
        <dbReference type="ChEBI" id="CHEBI:37565"/>
    </ligand>
</feature>
<feature type="binding site" description="in other chain" evidence="1">
    <location>
        <begin position="23"/>
        <end position="26"/>
    </location>
    <ligand>
        <name>IMP</name>
        <dbReference type="ChEBI" id="CHEBI:58053"/>
        <note>ligand shared between dimeric partners</note>
    </ligand>
</feature>
<feature type="binding site" evidence="1">
    <location>
        <position position="23"/>
    </location>
    <ligand>
        <name>Mg(2+)</name>
        <dbReference type="ChEBI" id="CHEBI:18420"/>
    </ligand>
</feature>
<feature type="binding site" description="in other chain" evidence="1">
    <location>
        <begin position="48"/>
        <end position="51"/>
    </location>
    <ligand>
        <name>IMP</name>
        <dbReference type="ChEBI" id="CHEBI:58053"/>
        <note>ligand shared between dimeric partners</note>
    </ligand>
</feature>
<feature type="binding site" evidence="1">
    <location>
        <begin position="50"/>
        <end position="52"/>
    </location>
    <ligand>
        <name>GTP</name>
        <dbReference type="ChEBI" id="CHEBI:37565"/>
    </ligand>
</feature>
<feature type="binding site" evidence="1">
    <location>
        <position position="50"/>
    </location>
    <ligand>
        <name>Mg(2+)</name>
        <dbReference type="ChEBI" id="CHEBI:18420"/>
    </ligand>
</feature>
<feature type="binding site" description="in other chain" evidence="1">
    <location>
        <position position="139"/>
    </location>
    <ligand>
        <name>IMP</name>
        <dbReference type="ChEBI" id="CHEBI:58053"/>
        <note>ligand shared between dimeric partners</note>
    </ligand>
</feature>
<feature type="binding site" evidence="1">
    <location>
        <position position="153"/>
    </location>
    <ligand>
        <name>IMP</name>
        <dbReference type="ChEBI" id="CHEBI:58053"/>
        <note>ligand shared between dimeric partners</note>
    </ligand>
</feature>
<feature type="binding site" description="in other chain" evidence="1">
    <location>
        <position position="234"/>
    </location>
    <ligand>
        <name>IMP</name>
        <dbReference type="ChEBI" id="CHEBI:58053"/>
        <note>ligand shared between dimeric partners</note>
    </ligand>
</feature>
<feature type="binding site" description="in other chain" evidence="1">
    <location>
        <position position="249"/>
    </location>
    <ligand>
        <name>IMP</name>
        <dbReference type="ChEBI" id="CHEBI:58053"/>
        <note>ligand shared between dimeric partners</note>
    </ligand>
</feature>
<feature type="binding site" evidence="1">
    <location>
        <begin position="317"/>
        <end position="323"/>
    </location>
    <ligand>
        <name>substrate</name>
    </ligand>
</feature>
<feature type="binding site" description="in other chain" evidence="1">
    <location>
        <position position="321"/>
    </location>
    <ligand>
        <name>IMP</name>
        <dbReference type="ChEBI" id="CHEBI:58053"/>
        <note>ligand shared between dimeric partners</note>
    </ligand>
</feature>
<feature type="binding site" evidence="1">
    <location>
        <position position="323"/>
    </location>
    <ligand>
        <name>GTP</name>
        <dbReference type="ChEBI" id="CHEBI:37565"/>
    </ligand>
</feature>
<feature type="binding site" evidence="1">
    <location>
        <begin position="349"/>
        <end position="351"/>
    </location>
    <ligand>
        <name>GTP</name>
        <dbReference type="ChEBI" id="CHEBI:37565"/>
    </ligand>
</feature>
<feature type="binding site" evidence="1">
    <location>
        <begin position="431"/>
        <end position="433"/>
    </location>
    <ligand>
        <name>GTP</name>
        <dbReference type="ChEBI" id="CHEBI:37565"/>
    </ligand>
</feature>
<name>PURA_BURP0</name>
<gene>
    <name evidence="1" type="primary">purA</name>
    <name type="ordered locus">BURPS1106A_2216</name>
</gene>
<evidence type="ECO:0000255" key="1">
    <source>
        <dbReference type="HAMAP-Rule" id="MF_00011"/>
    </source>
</evidence>
<accession>A3NVV9</accession>